<evidence type="ECO:0000255" key="1">
    <source>
        <dbReference type="HAMAP-Rule" id="MF_00203"/>
    </source>
</evidence>
<accession>B8CPE7</accession>
<dbReference type="EMBL" id="CP000472">
    <property type="protein sequence ID" value="ACJ29523.1"/>
    <property type="molecule type" value="Genomic_DNA"/>
</dbReference>
<dbReference type="RefSeq" id="WP_020912877.1">
    <property type="nucleotide sequence ID" value="NC_011566.1"/>
</dbReference>
<dbReference type="SMR" id="B8CPE7"/>
<dbReference type="STRING" id="225849.swp_2797"/>
<dbReference type="KEGG" id="swp:swp_2797"/>
<dbReference type="eggNOG" id="COG0322">
    <property type="taxonomic scope" value="Bacteria"/>
</dbReference>
<dbReference type="HOGENOM" id="CLU_014841_3_2_6"/>
<dbReference type="OrthoDB" id="9804933at2"/>
<dbReference type="Proteomes" id="UP000000753">
    <property type="component" value="Chromosome"/>
</dbReference>
<dbReference type="GO" id="GO:0005737">
    <property type="term" value="C:cytoplasm"/>
    <property type="evidence" value="ECO:0007669"/>
    <property type="project" value="UniProtKB-SubCell"/>
</dbReference>
<dbReference type="GO" id="GO:0009380">
    <property type="term" value="C:excinuclease repair complex"/>
    <property type="evidence" value="ECO:0007669"/>
    <property type="project" value="InterPro"/>
</dbReference>
<dbReference type="GO" id="GO:0003677">
    <property type="term" value="F:DNA binding"/>
    <property type="evidence" value="ECO:0007669"/>
    <property type="project" value="UniProtKB-UniRule"/>
</dbReference>
<dbReference type="GO" id="GO:0009381">
    <property type="term" value="F:excinuclease ABC activity"/>
    <property type="evidence" value="ECO:0007669"/>
    <property type="project" value="UniProtKB-UniRule"/>
</dbReference>
<dbReference type="GO" id="GO:0006289">
    <property type="term" value="P:nucleotide-excision repair"/>
    <property type="evidence" value="ECO:0007669"/>
    <property type="project" value="UniProtKB-UniRule"/>
</dbReference>
<dbReference type="GO" id="GO:0009432">
    <property type="term" value="P:SOS response"/>
    <property type="evidence" value="ECO:0007669"/>
    <property type="project" value="UniProtKB-UniRule"/>
</dbReference>
<dbReference type="CDD" id="cd10434">
    <property type="entry name" value="GIY-YIG_UvrC_Cho"/>
    <property type="match status" value="1"/>
</dbReference>
<dbReference type="FunFam" id="1.10.150.20:FF:000005">
    <property type="entry name" value="UvrABC system protein C"/>
    <property type="match status" value="1"/>
</dbReference>
<dbReference type="FunFam" id="3.30.420.340:FF:000001">
    <property type="entry name" value="UvrABC system protein C"/>
    <property type="match status" value="1"/>
</dbReference>
<dbReference type="FunFam" id="3.40.1440.10:FF:000001">
    <property type="entry name" value="UvrABC system protein C"/>
    <property type="match status" value="1"/>
</dbReference>
<dbReference type="Gene3D" id="1.10.150.20">
    <property type="entry name" value="5' to 3' exonuclease, C-terminal subdomain"/>
    <property type="match status" value="1"/>
</dbReference>
<dbReference type="Gene3D" id="3.40.1440.10">
    <property type="entry name" value="GIY-YIG endonuclease"/>
    <property type="match status" value="1"/>
</dbReference>
<dbReference type="Gene3D" id="4.10.860.10">
    <property type="entry name" value="UVR domain"/>
    <property type="match status" value="1"/>
</dbReference>
<dbReference type="Gene3D" id="3.30.420.340">
    <property type="entry name" value="UvrC, RNAse H endonuclease domain"/>
    <property type="match status" value="1"/>
</dbReference>
<dbReference type="HAMAP" id="MF_00203">
    <property type="entry name" value="UvrC"/>
    <property type="match status" value="1"/>
</dbReference>
<dbReference type="InterPro" id="IPR000305">
    <property type="entry name" value="GIY-YIG_endonuc"/>
</dbReference>
<dbReference type="InterPro" id="IPR035901">
    <property type="entry name" value="GIY-YIG_endonuc_sf"/>
</dbReference>
<dbReference type="InterPro" id="IPR047296">
    <property type="entry name" value="GIY-YIG_UvrC_Cho"/>
</dbReference>
<dbReference type="InterPro" id="IPR003583">
    <property type="entry name" value="Hlx-hairpin-Hlx_DNA-bd_motif"/>
</dbReference>
<dbReference type="InterPro" id="IPR010994">
    <property type="entry name" value="RuvA_2-like"/>
</dbReference>
<dbReference type="InterPro" id="IPR001943">
    <property type="entry name" value="UVR_dom"/>
</dbReference>
<dbReference type="InterPro" id="IPR036876">
    <property type="entry name" value="UVR_dom_sf"/>
</dbReference>
<dbReference type="InterPro" id="IPR050066">
    <property type="entry name" value="UvrABC_protein_C"/>
</dbReference>
<dbReference type="InterPro" id="IPR004791">
    <property type="entry name" value="UvrC"/>
</dbReference>
<dbReference type="InterPro" id="IPR001162">
    <property type="entry name" value="UvrC_RNase_H_dom"/>
</dbReference>
<dbReference type="InterPro" id="IPR038476">
    <property type="entry name" value="UvrC_RNase_H_dom_sf"/>
</dbReference>
<dbReference type="NCBIfam" id="NF001824">
    <property type="entry name" value="PRK00558.1-5"/>
    <property type="match status" value="1"/>
</dbReference>
<dbReference type="NCBIfam" id="TIGR00194">
    <property type="entry name" value="uvrC"/>
    <property type="match status" value="1"/>
</dbReference>
<dbReference type="PANTHER" id="PTHR30562:SF1">
    <property type="entry name" value="UVRABC SYSTEM PROTEIN C"/>
    <property type="match status" value="1"/>
</dbReference>
<dbReference type="PANTHER" id="PTHR30562">
    <property type="entry name" value="UVRC/OXIDOREDUCTASE"/>
    <property type="match status" value="1"/>
</dbReference>
<dbReference type="Pfam" id="PF01541">
    <property type="entry name" value="GIY-YIG"/>
    <property type="match status" value="1"/>
</dbReference>
<dbReference type="Pfam" id="PF14520">
    <property type="entry name" value="HHH_5"/>
    <property type="match status" value="1"/>
</dbReference>
<dbReference type="Pfam" id="PF02151">
    <property type="entry name" value="UVR"/>
    <property type="match status" value="1"/>
</dbReference>
<dbReference type="Pfam" id="PF22920">
    <property type="entry name" value="UvrC_RNaseH"/>
    <property type="match status" value="1"/>
</dbReference>
<dbReference type="Pfam" id="PF08459">
    <property type="entry name" value="UvrC_RNaseH_dom"/>
    <property type="match status" value="1"/>
</dbReference>
<dbReference type="SMART" id="SM00465">
    <property type="entry name" value="GIYc"/>
    <property type="match status" value="1"/>
</dbReference>
<dbReference type="SMART" id="SM00278">
    <property type="entry name" value="HhH1"/>
    <property type="match status" value="2"/>
</dbReference>
<dbReference type="SUPFAM" id="SSF46600">
    <property type="entry name" value="C-terminal UvrC-binding domain of UvrB"/>
    <property type="match status" value="1"/>
</dbReference>
<dbReference type="SUPFAM" id="SSF82771">
    <property type="entry name" value="GIY-YIG endonuclease"/>
    <property type="match status" value="1"/>
</dbReference>
<dbReference type="SUPFAM" id="SSF47781">
    <property type="entry name" value="RuvA domain 2-like"/>
    <property type="match status" value="1"/>
</dbReference>
<dbReference type="PROSITE" id="PS50164">
    <property type="entry name" value="GIY_YIG"/>
    <property type="match status" value="1"/>
</dbReference>
<dbReference type="PROSITE" id="PS50151">
    <property type="entry name" value="UVR"/>
    <property type="match status" value="1"/>
</dbReference>
<dbReference type="PROSITE" id="PS50165">
    <property type="entry name" value="UVRC"/>
    <property type="match status" value="1"/>
</dbReference>
<sequence>MSETFNSSEFLKTVTSSPGVYRMYDVDNIVIYVGKAKDLKKRLSSYFRKNLTNVKTQALVARIANIDVTITHSETDALILENDYIKQYMPKYNVLLRDDKSYPYILLSNHKHPRLSYHRGPKRAKGQYFGPYPNGGAVRESLHLLQKIFPIRQCDDLYYKARSRPCLQYQIGRCSAPCVDNVSLKDYQEQVALASLFLKGKDQQVTKALVAKMEQAAVELNYEQAARYRDQITALRRVAEQQEVSHSSGDMDVIGAHFASGVACFHLLFIREGKIFGSRSYYPKVPVDTELSEVLRAFMFQFYLNSDSQRVTPKEILVSDAFEEQAELAGAINTAQQRKVEIKSQVRGERAQFLRLALTNATNAVNTRLAHRNTVEQRFLLLEEAIEVSHKIQRMECFDISHTMGESTVSSCVVFNREGPNKADYRRYNIEGITPGDDYAAMKQAISRRFDKVAKAGKTPDILFIDGGIGQLRIAQKVVDEKFVALDHAPTLIGVAKGEGRKPGLETLIYGENEESFTLPADSGALHLIQQIRDESHRFAITGHRNKRQKTRNTSTLESIEGVGPKRRKALLQHLGGLQEVKSASVTELVKVPGISLEMAQTIHDALRG</sequence>
<feature type="chain" id="PRO_1000200599" description="UvrABC system protein C">
    <location>
        <begin position="1"/>
        <end position="609"/>
    </location>
</feature>
<feature type="domain" description="GIY-YIG" evidence="1">
    <location>
        <begin position="16"/>
        <end position="94"/>
    </location>
</feature>
<feature type="domain" description="UVR" evidence="1">
    <location>
        <begin position="203"/>
        <end position="238"/>
    </location>
</feature>
<comment type="function">
    <text evidence="1">The UvrABC repair system catalyzes the recognition and processing of DNA lesions. UvrC both incises the 5' and 3' sides of the lesion. The N-terminal half is responsible for the 3' incision and the C-terminal half is responsible for the 5' incision.</text>
</comment>
<comment type="subunit">
    <text evidence="1">Interacts with UvrB in an incision complex.</text>
</comment>
<comment type="subcellular location">
    <subcellularLocation>
        <location evidence="1">Cytoplasm</location>
    </subcellularLocation>
</comment>
<comment type="similarity">
    <text evidence="1">Belongs to the UvrC family.</text>
</comment>
<proteinExistence type="inferred from homology"/>
<gene>
    <name evidence="1" type="primary">uvrC</name>
    <name type="ordered locus">swp_2797</name>
</gene>
<protein>
    <recommendedName>
        <fullName evidence="1">UvrABC system protein C</fullName>
        <shortName evidence="1">Protein UvrC</shortName>
    </recommendedName>
    <alternativeName>
        <fullName evidence="1">Excinuclease ABC subunit C</fullName>
    </alternativeName>
</protein>
<name>UVRC_SHEPW</name>
<organism>
    <name type="scientific">Shewanella piezotolerans (strain WP3 / JCM 13877)</name>
    <dbReference type="NCBI Taxonomy" id="225849"/>
    <lineage>
        <taxon>Bacteria</taxon>
        <taxon>Pseudomonadati</taxon>
        <taxon>Pseudomonadota</taxon>
        <taxon>Gammaproteobacteria</taxon>
        <taxon>Alteromonadales</taxon>
        <taxon>Shewanellaceae</taxon>
        <taxon>Shewanella</taxon>
    </lineage>
</organism>
<reference key="1">
    <citation type="journal article" date="2008" name="PLoS ONE">
        <title>Environmental adaptation: genomic analysis of the piezotolerant and psychrotolerant deep-sea iron reducing bacterium Shewanella piezotolerans WP3.</title>
        <authorList>
            <person name="Wang F."/>
            <person name="Wang J."/>
            <person name="Jian H."/>
            <person name="Zhang B."/>
            <person name="Li S."/>
            <person name="Wang F."/>
            <person name="Zeng X."/>
            <person name="Gao L."/>
            <person name="Bartlett D.H."/>
            <person name="Yu J."/>
            <person name="Hu S."/>
            <person name="Xiao X."/>
        </authorList>
    </citation>
    <scope>NUCLEOTIDE SEQUENCE [LARGE SCALE GENOMIC DNA]</scope>
    <source>
        <strain>WP3 / JCM 13877</strain>
    </source>
</reference>
<keyword id="KW-0963">Cytoplasm</keyword>
<keyword id="KW-0227">DNA damage</keyword>
<keyword id="KW-0228">DNA excision</keyword>
<keyword id="KW-0234">DNA repair</keyword>
<keyword id="KW-0267">Excision nuclease</keyword>
<keyword id="KW-0742">SOS response</keyword>